<gene>
    <name evidence="1" type="primary">ilvD</name>
    <name type="ordered locus">XOO3996</name>
</gene>
<comment type="function">
    <text evidence="1">Functions in the biosynthesis of branched-chain amino acids. Catalyzes the dehydration of (2R,3R)-2,3-dihydroxy-3-methylpentanoate (2,3-dihydroxy-3-methylvalerate) into 2-oxo-3-methylpentanoate (2-oxo-3-methylvalerate) and of (2R)-2,3-dihydroxy-3-methylbutanoate (2,3-dihydroxyisovalerate) into 2-oxo-3-methylbutanoate (2-oxoisovalerate), the penultimate precursor to L-isoleucine and L-valine, respectively.</text>
</comment>
<comment type="catalytic activity">
    <reaction evidence="1">
        <text>(2R)-2,3-dihydroxy-3-methylbutanoate = 3-methyl-2-oxobutanoate + H2O</text>
        <dbReference type="Rhea" id="RHEA:24809"/>
        <dbReference type="ChEBI" id="CHEBI:11851"/>
        <dbReference type="ChEBI" id="CHEBI:15377"/>
        <dbReference type="ChEBI" id="CHEBI:49072"/>
        <dbReference type="EC" id="4.2.1.9"/>
    </reaction>
    <physiologicalReaction direction="left-to-right" evidence="1">
        <dbReference type="Rhea" id="RHEA:24810"/>
    </physiologicalReaction>
</comment>
<comment type="catalytic activity">
    <reaction evidence="1">
        <text>(2R,3R)-2,3-dihydroxy-3-methylpentanoate = (S)-3-methyl-2-oxopentanoate + H2O</text>
        <dbReference type="Rhea" id="RHEA:27694"/>
        <dbReference type="ChEBI" id="CHEBI:15377"/>
        <dbReference type="ChEBI" id="CHEBI:35146"/>
        <dbReference type="ChEBI" id="CHEBI:49258"/>
        <dbReference type="EC" id="4.2.1.9"/>
    </reaction>
    <physiologicalReaction direction="left-to-right" evidence="1">
        <dbReference type="Rhea" id="RHEA:27695"/>
    </physiologicalReaction>
</comment>
<comment type="cofactor">
    <cofactor evidence="1">
        <name>[2Fe-2S] cluster</name>
        <dbReference type="ChEBI" id="CHEBI:190135"/>
    </cofactor>
    <text evidence="1">Binds 1 [2Fe-2S] cluster per subunit. This cluster acts as a Lewis acid cofactor.</text>
</comment>
<comment type="cofactor">
    <cofactor evidence="1">
        <name>Mg(2+)</name>
        <dbReference type="ChEBI" id="CHEBI:18420"/>
    </cofactor>
</comment>
<comment type="pathway">
    <text evidence="1">Amino-acid biosynthesis; L-isoleucine biosynthesis; L-isoleucine from 2-oxobutanoate: step 3/4.</text>
</comment>
<comment type="pathway">
    <text evidence="1">Amino-acid biosynthesis; L-valine biosynthesis; L-valine from pyruvate: step 3/4.</text>
</comment>
<comment type="subunit">
    <text evidence="1">Homodimer.</text>
</comment>
<comment type="similarity">
    <text evidence="1">Belongs to the IlvD/Edd family.</text>
</comment>
<sequence>MPEYRSKTSTHGRNMAGARALWRATGMQDGDFQKPIIAIANSFTQFVPGHVHLKDLGQLVAREIERVGGVAKEFDTIAVDDGIAMGHDGMLYSLPSREIIADSVEYMVNAHCADALVCISNCDKITPGMLMAALRLNIPTVFVSGGPMEAGKTALAEHKLDLIDAMVIAADDSASDEKVAEFERSACPTCGSCSGMFTANSMNCLTEALGLSLPGNGTVVATHADREQLFLRAGRVAVELCHRWYGGEDPTALPRGIATFEAFENAMTLDIAMGGSTNTILHLLAAAQEGEVPFGMQDIDRLSKRVPQLCKVAPNTPKYHIEDVHRAGGIMAILGELARGGLLHTTAATVHARTLADAIAHWDVTQTVDENVHTFYKAGPAGIPTQIAFSQATRWDSLDTDRSEGCIRDVAHALSQEGGLAVLYGNIARDGCVVKTAGVDESIHVFEGTARVFESQDAAVKSILADEVKAGDVVVIRYEGPKGGPGMQEMLYPTSYLKSKGLGKQCALLTDGRFSGGTSGLSIGHASPEAAAGGAIGLVRDGDKILIDIPNRGINLLISDEALASRRAEQDAKGWKPVEVRPRKVTTALKAYALLATSADKGAVRDKALLDG</sequence>
<proteinExistence type="inferred from homology"/>
<dbReference type="EC" id="4.2.1.9" evidence="1"/>
<dbReference type="EMBL" id="AP008229">
    <property type="protein sequence ID" value="BAE70751.1"/>
    <property type="molecule type" value="Genomic_DNA"/>
</dbReference>
<dbReference type="RefSeq" id="WP_011260556.1">
    <property type="nucleotide sequence ID" value="NC_007705.1"/>
</dbReference>
<dbReference type="SMR" id="Q2NY76"/>
<dbReference type="KEGG" id="xom:XOO3996"/>
<dbReference type="HOGENOM" id="CLU_014271_4_2_6"/>
<dbReference type="UniPathway" id="UPA00047">
    <property type="reaction ID" value="UER00057"/>
</dbReference>
<dbReference type="UniPathway" id="UPA00049">
    <property type="reaction ID" value="UER00061"/>
</dbReference>
<dbReference type="GO" id="GO:0005829">
    <property type="term" value="C:cytosol"/>
    <property type="evidence" value="ECO:0007669"/>
    <property type="project" value="TreeGrafter"/>
</dbReference>
<dbReference type="GO" id="GO:0051537">
    <property type="term" value="F:2 iron, 2 sulfur cluster binding"/>
    <property type="evidence" value="ECO:0007669"/>
    <property type="project" value="UniProtKB-UniRule"/>
</dbReference>
<dbReference type="GO" id="GO:0004160">
    <property type="term" value="F:dihydroxy-acid dehydratase activity"/>
    <property type="evidence" value="ECO:0007669"/>
    <property type="project" value="UniProtKB-UniRule"/>
</dbReference>
<dbReference type="GO" id="GO:0000287">
    <property type="term" value="F:magnesium ion binding"/>
    <property type="evidence" value="ECO:0007669"/>
    <property type="project" value="UniProtKB-UniRule"/>
</dbReference>
<dbReference type="GO" id="GO:0009097">
    <property type="term" value="P:isoleucine biosynthetic process"/>
    <property type="evidence" value="ECO:0007669"/>
    <property type="project" value="UniProtKB-UniRule"/>
</dbReference>
<dbReference type="GO" id="GO:0009099">
    <property type="term" value="P:L-valine biosynthetic process"/>
    <property type="evidence" value="ECO:0007669"/>
    <property type="project" value="UniProtKB-UniRule"/>
</dbReference>
<dbReference type="FunFam" id="3.50.30.80:FF:000001">
    <property type="entry name" value="Dihydroxy-acid dehydratase"/>
    <property type="match status" value="1"/>
</dbReference>
<dbReference type="Gene3D" id="3.50.30.80">
    <property type="entry name" value="IlvD/EDD C-terminal domain-like"/>
    <property type="match status" value="1"/>
</dbReference>
<dbReference type="HAMAP" id="MF_00012">
    <property type="entry name" value="IlvD"/>
    <property type="match status" value="1"/>
</dbReference>
<dbReference type="InterPro" id="IPR042096">
    <property type="entry name" value="Dihydro-acid_dehy_C"/>
</dbReference>
<dbReference type="InterPro" id="IPR004404">
    <property type="entry name" value="DihydroxyA_deHydtase"/>
</dbReference>
<dbReference type="InterPro" id="IPR020558">
    <property type="entry name" value="DiOHA_6PGluconate_deHydtase_CS"/>
</dbReference>
<dbReference type="InterPro" id="IPR056740">
    <property type="entry name" value="ILV_EDD_C"/>
</dbReference>
<dbReference type="InterPro" id="IPR000581">
    <property type="entry name" value="ILV_EDD_N"/>
</dbReference>
<dbReference type="InterPro" id="IPR037237">
    <property type="entry name" value="IlvD/EDD_N"/>
</dbReference>
<dbReference type="NCBIfam" id="TIGR00110">
    <property type="entry name" value="ilvD"/>
    <property type="match status" value="1"/>
</dbReference>
<dbReference type="NCBIfam" id="NF009103">
    <property type="entry name" value="PRK12448.1"/>
    <property type="match status" value="1"/>
</dbReference>
<dbReference type="PANTHER" id="PTHR43661">
    <property type="entry name" value="D-XYLONATE DEHYDRATASE"/>
    <property type="match status" value="1"/>
</dbReference>
<dbReference type="PANTHER" id="PTHR43661:SF3">
    <property type="entry name" value="D-XYLONATE DEHYDRATASE YAGF-RELATED"/>
    <property type="match status" value="1"/>
</dbReference>
<dbReference type="Pfam" id="PF24877">
    <property type="entry name" value="ILV_EDD_C"/>
    <property type="match status" value="1"/>
</dbReference>
<dbReference type="Pfam" id="PF00920">
    <property type="entry name" value="ILVD_EDD_N"/>
    <property type="match status" value="1"/>
</dbReference>
<dbReference type="SUPFAM" id="SSF143975">
    <property type="entry name" value="IlvD/EDD N-terminal domain-like"/>
    <property type="match status" value="1"/>
</dbReference>
<dbReference type="SUPFAM" id="SSF52016">
    <property type="entry name" value="LeuD/IlvD-like"/>
    <property type="match status" value="1"/>
</dbReference>
<dbReference type="PROSITE" id="PS00886">
    <property type="entry name" value="ILVD_EDD_1"/>
    <property type="match status" value="1"/>
</dbReference>
<dbReference type="PROSITE" id="PS00887">
    <property type="entry name" value="ILVD_EDD_2"/>
    <property type="match status" value="1"/>
</dbReference>
<keyword id="KW-0001">2Fe-2S</keyword>
<keyword id="KW-0028">Amino-acid biosynthesis</keyword>
<keyword id="KW-0100">Branched-chain amino acid biosynthesis</keyword>
<keyword id="KW-0408">Iron</keyword>
<keyword id="KW-0411">Iron-sulfur</keyword>
<keyword id="KW-0456">Lyase</keyword>
<keyword id="KW-0460">Magnesium</keyword>
<keyword id="KW-0479">Metal-binding</keyword>
<name>ILVD_XANOM</name>
<evidence type="ECO:0000255" key="1">
    <source>
        <dbReference type="HAMAP-Rule" id="MF_00012"/>
    </source>
</evidence>
<organism>
    <name type="scientific">Xanthomonas oryzae pv. oryzae (strain MAFF 311018)</name>
    <dbReference type="NCBI Taxonomy" id="342109"/>
    <lineage>
        <taxon>Bacteria</taxon>
        <taxon>Pseudomonadati</taxon>
        <taxon>Pseudomonadota</taxon>
        <taxon>Gammaproteobacteria</taxon>
        <taxon>Lysobacterales</taxon>
        <taxon>Lysobacteraceae</taxon>
        <taxon>Xanthomonas</taxon>
    </lineage>
</organism>
<protein>
    <recommendedName>
        <fullName evidence="1">Dihydroxy-acid dehydratase</fullName>
        <shortName evidence="1">DAD</shortName>
        <ecNumber evidence="1">4.2.1.9</ecNumber>
    </recommendedName>
</protein>
<reference key="1">
    <citation type="journal article" date="2005" name="Jpn. Agric. Res. Q.">
        <title>Genome sequence of Xanthomonas oryzae pv. oryzae suggests contribution of large numbers of effector genes and insertion sequences to its race diversity.</title>
        <authorList>
            <person name="Ochiai H."/>
            <person name="Inoue Y."/>
            <person name="Takeya M."/>
            <person name="Sasaki A."/>
            <person name="Kaku H."/>
        </authorList>
    </citation>
    <scope>NUCLEOTIDE SEQUENCE [LARGE SCALE GENOMIC DNA]</scope>
    <source>
        <strain>MAFF 311018</strain>
    </source>
</reference>
<accession>Q2NY76</accession>
<feature type="chain" id="PRO_1000001082" description="Dihydroxy-acid dehydratase">
    <location>
        <begin position="1"/>
        <end position="612"/>
    </location>
</feature>
<feature type="active site" description="Proton acceptor" evidence="1">
    <location>
        <position position="515"/>
    </location>
</feature>
<feature type="binding site" evidence="1">
    <location>
        <position position="81"/>
    </location>
    <ligand>
        <name>Mg(2+)</name>
        <dbReference type="ChEBI" id="CHEBI:18420"/>
    </ligand>
</feature>
<feature type="binding site" evidence="1">
    <location>
        <position position="122"/>
    </location>
    <ligand>
        <name>[2Fe-2S] cluster</name>
        <dbReference type="ChEBI" id="CHEBI:190135"/>
    </ligand>
</feature>
<feature type="binding site" evidence="1">
    <location>
        <position position="123"/>
    </location>
    <ligand>
        <name>Mg(2+)</name>
        <dbReference type="ChEBI" id="CHEBI:18420"/>
    </ligand>
</feature>
<feature type="binding site" description="via carbamate group" evidence="1">
    <location>
        <position position="124"/>
    </location>
    <ligand>
        <name>Mg(2+)</name>
        <dbReference type="ChEBI" id="CHEBI:18420"/>
    </ligand>
</feature>
<feature type="binding site" evidence="1">
    <location>
        <position position="193"/>
    </location>
    <ligand>
        <name>[2Fe-2S] cluster</name>
        <dbReference type="ChEBI" id="CHEBI:190135"/>
    </ligand>
</feature>
<feature type="binding site" evidence="1">
    <location>
        <position position="489"/>
    </location>
    <ligand>
        <name>Mg(2+)</name>
        <dbReference type="ChEBI" id="CHEBI:18420"/>
    </ligand>
</feature>
<feature type="modified residue" description="N6-carboxylysine" evidence="1">
    <location>
        <position position="124"/>
    </location>
</feature>